<gene>
    <name type="ORF">1a</name>
</gene>
<organismHost>
    <name type="scientific">Blicca bjoerkna</name>
    <name type="common">white bream</name>
    <dbReference type="NCBI Taxonomy" id="58317"/>
</organismHost>
<comment type="function">
    <molecule>N7-guanine methyltransferase</molecule>
    <text evidence="7">Catalyzes the RNA guanylyltransferase reaction to methylate the core cap structure GpppN-RNA into the type-0 cap (m)GpppN-RNA.</text>
</comment>
<comment type="function">
    <molecule>3C-like serine proteinase</molecule>
    <text evidence="10">The 3C-like serine proteinase is responsible for the majority of cleavages.</text>
</comment>
<comment type="catalytic activity">
    <molecule>N7-guanine methyltransferase</molecule>
    <reaction evidence="7">
        <text>a 5'-end (5'-triphosphoguanosine)-ribonucleoside in mRNA + S-adenosyl-L-methionine = a 5'-end (N(7)-methyl 5'-triphosphoguanosine)-ribonucleoside in mRNA + S-adenosyl-L-homocysteine</text>
        <dbReference type="Rhea" id="RHEA:67008"/>
        <dbReference type="Rhea" id="RHEA-COMP:17166"/>
        <dbReference type="Rhea" id="RHEA-COMP:17167"/>
        <dbReference type="ChEBI" id="CHEBI:57856"/>
        <dbReference type="ChEBI" id="CHEBI:59789"/>
        <dbReference type="ChEBI" id="CHEBI:156461"/>
        <dbReference type="ChEBI" id="CHEBI:167617"/>
        <dbReference type="EC" id="2.1.1.56"/>
    </reaction>
</comment>
<comment type="biophysicochemical properties">
    <phDependence>
        <text evidence="7">Optimum pH is 8.5.</text>
    </phDependence>
</comment>
<comment type="subcellular location">
    <molecule>N7-guanine methyltransferase</molecule>
    <subcellularLocation>
        <location evidence="9">Host membrane</location>
        <topology evidence="9">Multi-pass membrane protein</topology>
    </subcellularLocation>
</comment>
<comment type="subcellular location">
    <molecule>Non-structural protein 2</molecule>
    <subcellularLocation>
        <location evidence="9">Host membrane</location>
        <topology evidence="9">Multi-pass membrane protein</topology>
    </subcellularLocation>
</comment>
<comment type="subcellular location">
    <molecule>Non-structural protein 4</molecule>
    <subcellularLocation>
        <location evidence="9">Host membrane</location>
        <topology evidence="9">Multi-pass membrane protein</topology>
    </subcellularLocation>
</comment>
<comment type="alternative products">
    <event type="ribosomal frameshifting"/>
    <isoform>
        <id>Q008X5-1</id>
        <name>Replicase polyprotein 1a</name>
        <name>pp1a</name>
        <name>ORF1a polyprotein</name>
        <sequence type="displayed"/>
    </isoform>
    <isoform>
        <id>Q008X6-1</id>
        <name>Replicase polyprotein 1ab</name>
        <name>pp1ab</name>
        <sequence type="external"/>
    </isoform>
</comment>
<comment type="domain">
    <molecule>Replicase polyprotein 1a</molecule>
    <text evidence="1">The hydrophobic domains (HD) could mediate the membrane association of the replication complex and thereby alter the architecture of the host cell membrane.</text>
</comment>
<comment type="PTM">
    <molecule>Replicase polyprotein 1a</molecule>
    <text evidence="6 9">Specific enzymatic cleavages in vivo by its own protease yield mature proteins (Probable). 3C-like serine proteinase is autocatalytically processed (PubMed:21068254). Two close N-terminal processing sites can be used, potentially resulting in 2 different processing products (PubMed:21068254). The preferential autocatalytic cleavage sites are displayed (PubMed:21068254).</text>
</comment>
<comment type="miscellaneous">
    <molecule>Isoform Replicase polyprotein 1a</molecule>
    <text>Produced by conventional translation.</text>
</comment>
<reference key="1">
    <citation type="journal article" date="2006" name="J. Virol.">
        <title>Characterization of White bream virus reveals a novel genetic cluster of nidoviruses.</title>
        <authorList>
            <person name="Schuetze H."/>
            <person name="Ulferts R."/>
            <person name="Schelle B."/>
            <person name="Bayer S."/>
            <person name="Granzow H."/>
            <person name="Hoffmann B."/>
            <person name="Mettenleiter T.C."/>
            <person name="Ziebuhr J."/>
        </authorList>
    </citation>
    <scope>NUCLEOTIDE SEQUENCE [GENOMIC RNA]</scope>
</reference>
<reference key="2">
    <citation type="journal article" date="2011" name="J. Virol.">
        <title>Characterization of Bafinivirus main protease autoprocessing activities.</title>
        <authorList>
            <person name="Ulferts R."/>
            <person name="Mettenleiter T.C."/>
            <person name="Ziebuhr J."/>
        </authorList>
    </citation>
    <scope>FUNCTION (3C-LIKE SERINE PROTEINASE)</scope>
    <scope>ACTIVE SITES (3C-LIKE SERINE PROTEINASE)</scope>
    <scope>MUTAGENESIS OF HIS-3492; ASP-3509; ASP-3518; THR-3584; SER-3589 AND HIS-3603</scope>
    <scope>PROTEOLYTIC CLEAVAGE (REPLICASE POLYPROTEIN 1AB)</scope>
    <scope>CATALYTIC ACTIVITY (3C-LIKE SERINE PROTEINASE)</scope>
</reference>
<reference key="3">
    <citation type="journal article" date="2022" name="Nucleic Acids Res.">
        <title>A second type of N7-guanine RNA cap methyltransferase in an unusual locus of a large RNA virus genome.</title>
        <authorList>
            <person name="Shannon A."/>
            <person name="Sama B."/>
            <person name="Gauffre P."/>
            <person name="Guez T."/>
            <person name="Debart F."/>
            <person name="Vasseur J.J."/>
            <person name="Decroly E."/>
            <person name="Canard B."/>
            <person name="Ferron F."/>
        </authorList>
    </citation>
    <scope>CATALYTIC ACTIVITY (7-GUANINE METHYLTRANSFERASE)</scope>
    <scope>FUNCTION (7-GUANINE METHYLTRANSFERASE)</scope>
    <scope>BIOPHYSICOCHEMICAL PROPERTIES (7-GUANINE METHYLTRANSFERASE)</scope>
    <scope>MUTAGENESIS OF LYS-1412; ASP-1427; LYS-1432; ASP-1460; GLU-1553 AND TYR-1613</scope>
</reference>
<proteinExistence type="evidence at protein level"/>
<name>R1A_WBV24</name>
<dbReference type="EC" id="2.1.1.56" evidence="7"/>
<dbReference type="EC" id="3.4.21.-"/>
<dbReference type="EMBL" id="DQ898157">
    <property type="protein sequence ID" value="ABI97393.1"/>
    <property type="molecule type" value="Genomic_RNA"/>
</dbReference>
<dbReference type="SMR" id="Q008X5"/>
<dbReference type="MEROPS" id="S75.001"/>
<dbReference type="KEGG" id="vg:4443108"/>
<dbReference type="Proteomes" id="UP000000680">
    <property type="component" value="Segment"/>
</dbReference>
<dbReference type="GO" id="GO:0033644">
    <property type="term" value="C:host cell membrane"/>
    <property type="evidence" value="ECO:0007669"/>
    <property type="project" value="UniProtKB-SubCell"/>
</dbReference>
<dbReference type="GO" id="GO:0016020">
    <property type="term" value="C:membrane"/>
    <property type="evidence" value="ECO:0007669"/>
    <property type="project" value="UniProtKB-KW"/>
</dbReference>
<dbReference type="GO" id="GO:0008234">
    <property type="term" value="F:cysteine-type peptidase activity"/>
    <property type="evidence" value="ECO:0007669"/>
    <property type="project" value="UniProtKB-KW"/>
</dbReference>
<dbReference type="GO" id="GO:0046872">
    <property type="term" value="F:metal ion binding"/>
    <property type="evidence" value="ECO:0007669"/>
    <property type="project" value="UniProtKB-KW"/>
</dbReference>
<dbReference type="GO" id="GO:0008168">
    <property type="term" value="F:methyltransferase activity"/>
    <property type="evidence" value="ECO:0007669"/>
    <property type="project" value="UniProtKB-KW"/>
</dbReference>
<dbReference type="GO" id="GO:0032259">
    <property type="term" value="P:methylation"/>
    <property type="evidence" value="ECO:0007669"/>
    <property type="project" value="UniProtKB-KW"/>
</dbReference>
<dbReference type="GO" id="GO:0006508">
    <property type="term" value="P:proteolysis"/>
    <property type="evidence" value="ECO:0007669"/>
    <property type="project" value="UniProtKB-KW"/>
</dbReference>
<dbReference type="GO" id="GO:0075523">
    <property type="term" value="P:viral translational frameshifting"/>
    <property type="evidence" value="ECO:0007669"/>
    <property type="project" value="UniProtKB-KW"/>
</dbReference>
<dbReference type="CDD" id="cd02440">
    <property type="entry name" value="AdoMet_MTases"/>
    <property type="match status" value="1"/>
</dbReference>
<dbReference type="CDD" id="cd21557">
    <property type="entry name" value="Macro_X_Nsp3-like"/>
    <property type="match status" value="1"/>
</dbReference>
<dbReference type="Gene3D" id="3.40.220.10">
    <property type="entry name" value="Leucine Aminopeptidase, subunit E, domain 1"/>
    <property type="match status" value="1"/>
</dbReference>
<dbReference type="Gene3D" id="3.40.50.150">
    <property type="entry name" value="Vaccinia Virus protein VP39"/>
    <property type="match status" value="1"/>
</dbReference>
<dbReference type="InterPro" id="IPR002589">
    <property type="entry name" value="Macro_dom"/>
</dbReference>
<dbReference type="InterPro" id="IPR043472">
    <property type="entry name" value="Macro_dom-like"/>
</dbReference>
<dbReference type="InterPro" id="IPR044371">
    <property type="entry name" value="Macro_X_NSP3-like"/>
</dbReference>
<dbReference type="InterPro" id="IPR041698">
    <property type="entry name" value="Methyltransf_25"/>
</dbReference>
<dbReference type="InterPro" id="IPR004971">
    <property type="entry name" value="mRNA_G-N7_MeTrfase_dom"/>
</dbReference>
<dbReference type="InterPro" id="IPR009003">
    <property type="entry name" value="Peptidase_S1_PA"/>
</dbReference>
<dbReference type="InterPro" id="IPR029063">
    <property type="entry name" value="SAM-dependent_MTases_sf"/>
</dbReference>
<dbReference type="PANTHER" id="PTHR24216:SF65">
    <property type="entry name" value="PAXILLIN-LIKE PROTEIN 1"/>
    <property type="match status" value="1"/>
</dbReference>
<dbReference type="PANTHER" id="PTHR24216">
    <property type="entry name" value="PAXILLIN-RELATED"/>
    <property type="match status" value="1"/>
</dbReference>
<dbReference type="Pfam" id="PF01661">
    <property type="entry name" value="Macro"/>
    <property type="match status" value="1"/>
</dbReference>
<dbReference type="Pfam" id="PF13649">
    <property type="entry name" value="Methyltransf_25"/>
    <property type="match status" value="1"/>
</dbReference>
<dbReference type="SMART" id="SM00506">
    <property type="entry name" value="A1pp"/>
    <property type="match status" value="1"/>
</dbReference>
<dbReference type="SUPFAM" id="SSF52949">
    <property type="entry name" value="Macro domain-like"/>
    <property type="match status" value="1"/>
</dbReference>
<dbReference type="SUPFAM" id="SSF53335">
    <property type="entry name" value="S-adenosyl-L-methionine-dependent methyltransferases"/>
    <property type="match status" value="1"/>
</dbReference>
<dbReference type="SUPFAM" id="SSF50494">
    <property type="entry name" value="Trypsin-like serine proteases"/>
    <property type="match status" value="1"/>
</dbReference>
<dbReference type="PROSITE" id="PS51154">
    <property type="entry name" value="MACRO"/>
    <property type="match status" value="1"/>
</dbReference>
<dbReference type="PROSITE" id="PS51562">
    <property type="entry name" value="RNA_CAP0_MT"/>
    <property type="match status" value="1"/>
</dbReference>
<dbReference type="PROSITE" id="PS00135">
    <property type="entry name" value="TRYPSIN_SER"/>
    <property type="match status" value="1"/>
</dbReference>
<feature type="chain" id="PRO_0000408895" description="Replicase polyprotein 1a">
    <location>
        <begin position="1"/>
        <end position="4555"/>
    </location>
</feature>
<feature type="chain" id="PRO_0000408896" description="N7-guanine methyltransferase" evidence="2">
    <location>
        <begin position="1"/>
        <end position="3071"/>
    </location>
</feature>
<feature type="chain" id="PRO_0000408897" description="Non-structural protein 2" evidence="2">
    <location>
        <begin position="3072"/>
        <end position="3442"/>
    </location>
</feature>
<feature type="chain" id="PRO_0000408898" description="3C-like serine proteinase" evidence="9">
    <location>
        <begin position="3443"/>
        <end position="3709"/>
    </location>
</feature>
<feature type="chain" id="PRO_0000408899" description="Non-structural protein 4" evidence="2">
    <location>
        <begin position="3710"/>
        <end position="3985"/>
    </location>
</feature>
<feature type="chain" id="PRO_0000408900" description="Non-structural protein 5" evidence="2">
    <location>
        <begin position="3986"/>
        <end position="4157"/>
    </location>
</feature>
<feature type="chain" id="PRO_0000408901" description="Non-structural protein 6" evidence="2">
    <location>
        <begin position="4158"/>
        <end position="4375"/>
    </location>
</feature>
<feature type="chain" id="PRO_0000408902" description="Non-structural protein 7" evidence="2">
    <location>
        <begin position="4376"/>
        <end position="4452"/>
    </location>
</feature>
<feature type="chain" id="PRO_0000408903" description="Non-structural protein 8" evidence="2">
    <location>
        <begin position="4453"/>
        <end position="4555"/>
    </location>
</feature>
<feature type="transmembrane region" description="Helical" evidence="2">
    <location>
        <begin position="2542"/>
        <end position="2564"/>
    </location>
</feature>
<feature type="transmembrane region" description="Helical" evidence="2">
    <location>
        <begin position="2571"/>
        <end position="2593"/>
    </location>
</feature>
<feature type="transmembrane region" description="Helical" evidence="2">
    <location>
        <begin position="2644"/>
        <end position="2664"/>
    </location>
</feature>
<feature type="transmembrane region" description="Helical" evidence="2">
    <location>
        <begin position="2744"/>
        <end position="2764"/>
    </location>
</feature>
<feature type="transmembrane region" description="Helical" evidence="2">
    <location>
        <begin position="2773"/>
        <end position="2793"/>
    </location>
</feature>
<feature type="transmembrane region" description="Helical" evidence="2">
    <location>
        <begin position="3079"/>
        <end position="3099"/>
    </location>
</feature>
<feature type="transmembrane region" description="Helical" evidence="2">
    <location>
        <begin position="3247"/>
        <end position="3267"/>
    </location>
</feature>
<feature type="transmembrane region" description="Helical" evidence="2">
    <location>
        <begin position="3278"/>
        <end position="3298"/>
    </location>
</feature>
<feature type="transmembrane region" description="Helical" evidence="2">
    <location>
        <begin position="3319"/>
        <end position="3339"/>
    </location>
</feature>
<feature type="transmembrane region" description="Helical" evidence="2">
    <location>
        <begin position="3725"/>
        <end position="3745"/>
    </location>
</feature>
<feature type="transmembrane region" description="Helical" evidence="2">
    <location>
        <begin position="3751"/>
        <end position="3771"/>
    </location>
</feature>
<feature type="transmembrane region" description="Helical" evidence="2">
    <location>
        <begin position="3789"/>
        <end position="3809"/>
    </location>
</feature>
<feature type="transmembrane region" description="Helical" evidence="2">
    <location>
        <begin position="3813"/>
        <end position="3833"/>
    </location>
</feature>
<feature type="transmembrane region" description="Helical" evidence="2">
    <location>
        <begin position="3844"/>
        <end position="3864"/>
    </location>
</feature>
<feature type="transmembrane region" description="Helical" evidence="2">
    <location>
        <begin position="3888"/>
        <end position="3908"/>
    </location>
</feature>
<feature type="transmembrane region" description="Helical" evidence="2">
    <location>
        <begin position="3911"/>
        <end position="3931"/>
    </location>
</feature>
<feature type="domain" description="mRNA cap 0 methyltransferase" evidence="4 7">
    <location>
        <begin position="1399"/>
        <end position="1621"/>
    </location>
</feature>
<feature type="domain" description="Macro" evidence="3">
    <location>
        <begin position="1637"/>
        <end position="1827"/>
    </location>
</feature>
<feature type="region of interest" description="Disordered" evidence="5">
    <location>
        <begin position="159"/>
        <end position="183"/>
    </location>
</feature>
<feature type="region of interest" description="Disordered" evidence="5">
    <location>
        <begin position="972"/>
        <end position="1037"/>
    </location>
</feature>
<feature type="region of interest" description="Disordered" evidence="5">
    <location>
        <begin position="1120"/>
        <end position="1200"/>
    </location>
</feature>
<feature type="region of interest" description="Disordered" evidence="5">
    <location>
        <begin position="2037"/>
        <end position="2112"/>
    </location>
</feature>
<feature type="region of interest" description="HD1" evidence="1">
    <location>
        <begin position="2293"/>
        <end position="2683"/>
    </location>
</feature>
<feature type="region of interest" description="HD2" evidence="1">
    <location>
        <begin position="2889"/>
        <end position="3156"/>
    </location>
</feature>
<feature type="region of interest" description="HD3" evidence="1">
    <location>
        <begin position="3546"/>
        <end position="3732"/>
    </location>
</feature>
<feature type="coiled-coil region" evidence="2">
    <location>
        <begin position="4212"/>
        <end position="4250"/>
    </location>
</feature>
<feature type="compositionally biased region" description="Low complexity" evidence="5">
    <location>
        <begin position="163"/>
        <end position="175"/>
    </location>
</feature>
<feature type="compositionally biased region" description="Pro residues" evidence="5">
    <location>
        <begin position="1016"/>
        <end position="1028"/>
    </location>
</feature>
<feature type="compositionally biased region" description="Low complexity" evidence="5">
    <location>
        <begin position="1121"/>
        <end position="1134"/>
    </location>
</feature>
<feature type="compositionally biased region" description="Low complexity" evidence="5">
    <location>
        <begin position="1144"/>
        <end position="1185"/>
    </location>
</feature>
<feature type="compositionally biased region" description="Low complexity" evidence="5">
    <location>
        <begin position="2043"/>
        <end position="2053"/>
    </location>
</feature>
<feature type="compositionally biased region" description="Polar residues" evidence="5">
    <location>
        <begin position="2061"/>
        <end position="2070"/>
    </location>
</feature>
<feature type="compositionally biased region" description="Low complexity" evidence="5">
    <location>
        <begin position="2080"/>
        <end position="2112"/>
    </location>
</feature>
<feature type="active site" description="Charge relay system; for 3C-like serine proteinase activity" evidence="10">
    <location>
        <position position="3492"/>
    </location>
</feature>
<feature type="active site" description="Charge relay system; for 3C-like serine proteinase activity" evidence="10">
    <location>
        <position position="3518"/>
    </location>
</feature>
<feature type="active site" description="Charge relay system; for 3C-like serine proteinase activity" evidence="10">
    <location>
        <position position="3589"/>
    </location>
</feature>
<feature type="site" description="Cleavage; by 3C-like serine proteinase">
    <location>
        <begin position="3071"/>
        <end position="3072"/>
    </location>
</feature>
<feature type="site" description="Cleavage; by autolysis" evidence="6">
    <location>
        <begin position="3442"/>
        <end position="3443"/>
    </location>
</feature>
<feature type="site" description="Substrate binding" evidence="2">
    <location>
        <position position="3603"/>
    </location>
</feature>
<feature type="site" description="Cleavage; by autolysis" evidence="6">
    <location>
        <begin position="3709"/>
        <end position="3710"/>
    </location>
</feature>
<feature type="site" description="Cleavage; by 3C-like serine proteinase" evidence="2">
    <location>
        <begin position="3985"/>
        <end position="3986"/>
    </location>
</feature>
<feature type="site" description="Cleavage; by 3C-like serine proteinase" evidence="2">
    <location>
        <begin position="4157"/>
        <end position="4158"/>
    </location>
</feature>
<feature type="site" description="Cleavage; by 3C-like serine proteinase" evidence="2">
    <location>
        <begin position="4375"/>
        <end position="4376"/>
    </location>
</feature>
<feature type="site" description="Cleavage; by 3C-like serine proteinase" evidence="2">
    <location>
        <begin position="4452"/>
        <end position="4453"/>
    </location>
</feature>
<feature type="mutagenesis site" description="Complete loss of N7 methyltransferase activity." evidence="7">
    <original>K</original>
    <variation>A</variation>
    <location>
        <position position="1412"/>
    </location>
</feature>
<feature type="mutagenesis site" description="Complete loss of N7 methyltransferase activity." evidence="7">
    <original>D</original>
    <variation>A</variation>
    <location>
        <position position="1427"/>
    </location>
</feature>
<feature type="mutagenesis site" description="80% loss of N7 methyltransferase activity." evidence="7">
    <original>K</original>
    <variation>A</variation>
    <location>
        <position position="1432"/>
    </location>
</feature>
<feature type="mutagenesis site" description="Complete loss of N7 methyltransferase activity." evidence="7">
    <original>D</original>
    <variation>A</variation>
    <location>
        <position position="1460"/>
    </location>
</feature>
<feature type="mutagenesis site" description="Complete loss of N7 methyltransferase activity." evidence="7">
    <original>E</original>
    <variation>A</variation>
    <location>
        <position position="1553"/>
    </location>
</feature>
<feature type="mutagenesis site" description="Complete loss of N7 methyltransferase activity." evidence="7">
    <original>Y</original>
    <variation>A</variation>
    <location>
        <position position="1613"/>
    </location>
</feature>
<feature type="mutagenesis site" description="Loss of proteolytic processing." evidence="6">
    <original>H</original>
    <variation>A</variation>
    <location>
        <position position="3492"/>
    </location>
</feature>
<feature type="mutagenesis site" description="No effect on proteolytic processing." evidence="6">
    <original>D</original>
    <variation>A</variation>
    <location>
        <position position="3509"/>
    </location>
</feature>
<feature type="mutagenesis site" description="Reduced proteolytic processing." evidence="6">
    <original>D</original>
    <variation>A</variation>
    <location>
        <position position="3518"/>
    </location>
</feature>
<feature type="mutagenesis site" description="Reduced proteolytic processing.">
    <original>T</original>
    <variation>A</variation>
    <location>
        <position position="3584"/>
    </location>
</feature>
<feature type="mutagenesis site" description="Loss of proteolytic processing." evidence="6">
    <original>S</original>
    <variation>A</variation>
    <location>
        <position position="3589"/>
    </location>
</feature>
<feature type="mutagenesis site" description="Loss of proteolytic processing." evidence="6">
    <original>H</original>
    <variation>A</variation>
    <location>
        <position position="3603"/>
    </location>
</feature>
<accession>Q008X5</accession>
<protein>
    <recommendedName>
        <fullName>Replicase polyprotein 1a</fullName>
        <shortName>pp1a</shortName>
    </recommendedName>
    <alternativeName>
        <fullName>ORF1a polyprotein</fullName>
    </alternativeName>
    <component>
        <recommendedName>
            <fullName>N7-guanine methyltransferase</fullName>
            <ecNumber evidence="7">2.1.1.56</ecNumber>
        </recommendedName>
        <alternativeName>
            <fullName evidence="8">Non-structural protein 1</fullName>
            <shortName>nsp1</shortName>
        </alternativeName>
    </component>
    <component>
        <recommendedName>
            <fullName>Non-structural protein 2</fullName>
            <shortName>nsp2</shortName>
        </recommendedName>
    </component>
    <component>
        <recommendedName>
            <fullName>3C-like serine proteinase</fullName>
            <shortName>3CLSP</shortName>
            <ecNumber>3.4.21.-</ecNumber>
        </recommendedName>
        <alternativeName>
            <fullName>M-PRO</fullName>
        </alternativeName>
        <alternativeName>
            <fullName>nsp3</fullName>
        </alternativeName>
        <alternativeName>
            <fullName>p27</fullName>
        </alternativeName>
    </component>
    <component>
        <recommendedName>
            <fullName>Non-structural protein 4</fullName>
            <shortName>nsp4</shortName>
        </recommendedName>
    </component>
    <component>
        <recommendedName>
            <fullName>Non-structural protein 5</fullName>
            <shortName>nsp5</shortName>
        </recommendedName>
    </component>
    <component>
        <recommendedName>
            <fullName>Non-structural protein 6</fullName>
            <shortName>nsp6</shortName>
        </recommendedName>
    </component>
    <component>
        <recommendedName>
            <fullName>Non-structural protein 7</fullName>
            <shortName>nsp7</shortName>
        </recommendedName>
    </component>
    <component>
        <recommendedName>
            <fullName>Non-structural protein 8</fullName>
            <shortName>nsp8</shortName>
        </recommendedName>
    </component>
</protein>
<sequence length="4555" mass="508987">MSILFGNRQANATKRSDMASVARAVYEVDLISTKYARRTQERLAHNKHAKPSYPSVFFGRRMKAVKEPTFTPSTLFFEEATLPKVLASKAKPDTGIKTRRVYVADSLTINGHTYPIVGHFVEMAVSKKEAFPIQPKRVKPKPLMAKPIPNIRRTFLTPEERTNTPTTPTTTTTTPFVAGETAGPTIEYTPTSIDLPFAMPTVKQIKENAHTILREQDDCLRFAQTALFKHLGTVTHTTPNHATTFQVKGRTSLLTFEWRKTTQSPLTDGHFYLQTANNHAELMQPVEGKLTTIFTTTIQQGTTHSLHLIKQESARTLKTRKPLKLVTYKQETPTTTITPQSLKKTITYIPGSFCINVAEPTLQSVMRRQPLTPTPNDALLQIYHKLGCTTKSPNHASTFELFGNTYTWYPVQHTNNLLHKDPNRRFFLHITGQTPQLLIRTERKTFLTLQDEVTYISGKLFVMNHAPIQGEYKTQTAEWVGSYNMAKTPKAIKPAKTVEYINTTPCHKPATMPAPITYRQCPYTWTLHEPSISKVQRNLFHIPKTATNCLDRIQKALFPEIVTSNQHFPIGFTIQTDTTMQSYEWAILCKKVTRTYYLAVQNHHATLWYKCAQVYMCLSDDIAPTTELQGSVYILNKVTDPGFYQNTRQWCGSNDDLHEPKHLIKNLANGDVNNIAHCSLTPWTTTPLVYSTQKNKLTRKLIHYYNATYTVQVPKENPNAQPSTMKCAYKAYIDLATPTELQIHLDLEIQGKLYSQTAQKKGSKFNKLDIPTFGDILKGTLYVFSSKVLLYEQPKRCTSVCFHLPNNAQSFFFNTETIQTFEDLFARISSEEVEDNLVLIKGFVPCLGAIYITKDLKFIQPELKEDFKHPTTYYTFTTTVDPEQVLYSLHPSFTDIVPPHGFPYYTFAKLNNHIDAWNITDDQADTLAEAQPIIFQWPTEEATITTPYKVLHYEHLEGLDYISLSSFNTVECPEETQSAHDSSSESESEDEELPAHPLSNAPSQASLSSVASTAPPTSPTSSPTPSPTPLQQQVGLKGKEVPVGGWVLVSEEETPSEEVDSPKLLPNEVPLSFDFDLPIEPITRPISPELQQPILTHYEHPTSPTPSVEIEIDFGSYENLTLQTEETVTTEVQPEPTPAPTPEPTIVTETVQETPVPTETTQESTPESTPESTPEPTPESTSESTLEPEHVATPSQSPTHITVTEITHEPETPDSWSERYDSTSNIPEVFNQLSFGSTDSVKITTPKTETPDEPQQPTVETVSAAQQLLQIVQTATPDIAQLMSELPPYRLICIGSYCPILAENISKQLPTAVTTPTDADIPTVIFNVSEETMDTVINTVKTKHQANHLTFSLTTIIALDVPKDKSLPLQQIYDKLTQQDYNTDFIYESHHRQPKESLTHASVLSAYTASYKTTAIKSIADNAVVLDIGYGKGNDGPRYAVRPLTVTGIDTAARMLAIADQNKPENVTLVKQGFFTHITKTSNTYTHVIAFNSLHYPLASSHPDTLVQRLPTCPANILIPCHHLLEGIQTPTYSVVKDEDMWCVKVTKNEFIESSYNYDVFVKALESKYHVTIGSLLDCVEKPSTRSITPTLWTAMRNFVNNDQEMQRILSGYITFNLTPLPPKVEIINDWLDNNATVTINNPFASNEGVTFAVHNIGAITTTEGEFIVNAANKQLNNGTGVTGAIFAAHDKELKLTQAIKALPTYGASDKLESHQHVVQTIIKNNNSTHAINILHAAAPIKVKCTSKNPEVLLAHNETAQSELKETYKAIVDYAQLNKLTHIYLPLFGAGAYGHKPLDSLEAFLDAMRNRSPQSTTQYTLLLSDPVKPLDNPSFSYEFLNLLVTNLNINKQFAQLIVNKYHNTCALQSAIQMNTTTDTHNFLATFIYLLYTMPYSMNTFRQTHTPEEPFTPGKMVTVVDTTIAFLTTLDILPPCGQPCGYLPPSITKDGEYICACQKTSNWSLPFHFYNARYNKVYHTGLNNILTHKHSAFHKSRNAAHFIAKTGPSTSSYPVYMAPVPEILAYNASYRDSCQDNAIEEQSDSQASQSPSSPVTIPVSLPTASPASSVKSALRSDIPITTDQQSTTSASISTATTASTIPTAPLTSSDSNTSVVTSLYGNMEELTYLDASGTSQDFILSETTPFIAHIYHNNEATFIPPGYQLLDTNTNDPIEMYITPPRPIDGSPMISLASTASTTPMTYPLLSIRLTTEELTSFFKTKTDKFHLISHKSCLTVHLFDSPTLNSIAADSTSDAHLYQQHLKDLYTFSDCCSMYTRTEVYNCIEADTPLIRQSEQTKFHPINLDTLIEMVATFPPIVKRYSQTTTPDFTNLTVYFVSNGDIITTPTGSTSEQPPQLKIFLDYQTSSKFTTLVDLTLHEQTEANTIITYHHGEHQLLKPNPSAFYIEFQTYSSFFSRFQTFSTNFFWTLFINFLINVRFCITADSAYFHWQGKPIETTNLNIVYSIGRLDFVLSKHTTPWLTKPTDTLNPLTLIKNTLVQPIAINFHGRIRPLQSTNTRFGATHTPTKLPVHLLNTSLRTHYLSLLSLFQCTFSVFLAYIALLYSFSGHGIFTVVAYFTMLFARYYITSFINFCTSQLTATQVTQWFAAIKAKYTGIYESSQDRVLTVNVTGTNVPYIVKYSTILTVTMYVAFMAFVWTVSTYAAQYTAGERYDRPPYQTVFQKTLNVLGLTETVTYYYPYASLNEACAASTSILCRLGSPFNFHYPSDYTQVRTVQTDTSSPFWLFIIFMPPSFLFIVLPWLILCTITPTVSIAQLLVPSIILNATIVFIYIRRKFTGHCCGPHTCIKHADISRSLQFRPTSQIQHSLTFCGTLCAKHNWYCNNSDSPTHTLGIQLAQLIETTYKLQPGTIKPDSSYTHTTETATLPIMKVSTTSTDFTTSEPNTTVEHLHLQVIAHVTGTRISIESSSNKVQQQNTQHTRLTNKPVTGFMHTTLLQKLKRQHKDELSSYLCNFVPSDNKKDCILPHSVVHMTLTENQRTFLLKNFTFSTNVTVDPTTTGFIPSSLNISTLPHKHFMINVIESAMLAKLPKEVQDTLRTTHLETTTLERQAMSLTTQAILTTFALIMATFVVAFLAFFSTAQVGKTPYAGLNPTMVGNVNAEPYIQPTTLENSILIPLHGASKVCWRAQNGTLFFTDAIPTTECARAAVPYIGYKSEFTQTCASSNLRYPFTVYLGSIKVMYLRDGISYLTSTLSHNSNTKKLCVQVGSNAVRCASVLPTGASSNVAALLMASVVVISMVLFYLYLLQIFKFYTNSVIMSFVIQLLTLLATTVSTPLAVTVQLFVITYGYTNWILLTLSLLNLTVLLSTPVGITFVVIYGLYKAYTLFTSSGQGCVYNEGGTIRFSGSFEQVANSTFPLTNASCVQLLSDLGITYQQLNVYASSRDRNVRRLAQALLHRQLDSASECILYEGCSGNTITRQALQRIRQAVTVVVTPASQNLCKITSNQANGIGLSCTGTFFTSTEIITCAHGIGTSDITAVHKGITYDCKVKSINNDIAILITTTVNLSVQNIKLDSSFSQKSDNYQRNFVQFVSFVDQQNSDAVTINNTVMLPSGHFFAIGTEAGESGSPYTLNGNIIGIHYGIDNAGSWMLASRPDGSFYVPATQHGNSAKVTFSTDAFAQQFPAIVTNKTSDQLVNEIAATNNTAFELDTTDVSHLSNLLKHLKNNNETPKSLSDYLPVAPVTQQTSVTVGQTLTSPVNNMQTALYTLMLVSEVITYILTPNSDLSVLISMFVTSAFLKFGASKLFYNTEMLRNTITTFVVYRYTTLLIALVFSQYYLHILSYALKLNTLVLTVIALTFLVTPLVLLTIRRVYYYSQNYLISCVFIISCFASHTYTLYILTDTTVDFQTFIISEPIFSTLLCNLFIGFTLISVVPNPLYVCVVFMYILLDCEALGFIVTCFMASYLCPKPLRSLTTFLCTDTLVLTAPAYLHWYGAKGTQREYSVIYAVFDSILTPETTIQIPVTIMEGIEQQVKFIFAVPKSANIQDEEEAYVEYNQNSDIKDLAIKNEEKVCTITGMFRKTRTIKGTLMESFYPRHQPDSYILNQVVRHNYVLAHDPETIILTTVNPTHLESEPFQTIVKKVRKLHALYQEISEQSSDDTELCHAYILALIKSTVLEAQMPTEKINFVSSQTMLSPAMILIFAEAYQILTESRSFTNHITPQSDIGSMQTTLASLAEMDTDEMTPQERKIHIKRMNVLKQEIAKMESASLKLEKFLDNMHKAEISKRGKEDILLKVSNMLRLHLNKVANAAHCTIQTPSAGLITLASAFDVHSLCVTQHSESVLIQTPDDDTFLVYVDGQIYTCYNPTDITGKKLVPINVMSPDNVQFPTYPVVFSLSKQDYAEEITEQNNIGYTERTHNFKLKELASGLAVTLDGLVVVTETKELATAFKIGQRYFKFLNTNKTPVARNNTHAIIQLLRNNISQQAVVRIGGSRVSNDHIAISQVPVQTIGYLTYAGISVCRQCATKQDHTCQYAGYFVQIPREHVSNIFNLTDTPPCLHNKFTCTTCQPLQQQSKTQQPPLNWWGSV</sequence>
<keyword id="KW-0175">Coiled coil</keyword>
<keyword id="KW-1043">Host membrane</keyword>
<keyword id="KW-0378">Hydrolase</keyword>
<keyword id="KW-0472">Membrane</keyword>
<keyword id="KW-0479">Metal-binding</keyword>
<keyword id="KW-0489">Methyltransferase</keyword>
<keyword id="KW-0645">Protease</keyword>
<keyword id="KW-1185">Reference proteome</keyword>
<keyword id="KW-0677">Repeat</keyword>
<keyword id="KW-0688">Ribosomal frameshifting</keyword>
<keyword id="KW-0788">Thiol protease</keyword>
<keyword id="KW-0808">Transferase</keyword>
<keyword id="KW-0812">Transmembrane</keyword>
<keyword id="KW-1133">Transmembrane helix</keyword>
<organism>
    <name type="scientific">White bream virus (isolate Blicca bjoerkna L./Germany/DF24/00)</name>
    <name type="common">WBV</name>
    <dbReference type="NCBI Taxonomy" id="766180"/>
    <lineage>
        <taxon>Viruses</taxon>
        <taxon>Riboviria</taxon>
        <taxon>Orthornavirae</taxon>
        <taxon>Pisuviricota</taxon>
        <taxon>Pisoniviricetes</taxon>
        <taxon>Nidovirales</taxon>
        <taxon>Tornidovirineae</taxon>
        <taxon>Tobaniviridae</taxon>
        <taxon>Piscanivirinae</taxon>
        <taxon>Bafinivirus</taxon>
        <taxon>Blicbavirus</taxon>
        <taxon>White bream virus</taxon>
    </lineage>
</organism>
<evidence type="ECO:0000250" key="1"/>
<evidence type="ECO:0000255" key="2"/>
<evidence type="ECO:0000255" key="3">
    <source>
        <dbReference type="PROSITE-ProRule" id="PRU00490"/>
    </source>
</evidence>
<evidence type="ECO:0000255" key="4">
    <source>
        <dbReference type="PROSITE-ProRule" id="PRU00895"/>
    </source>
</evidence>
<evidence type="ECO:0000256" key="5">
    <source>
        <dbReference type="SAM" id="MobiDB-lite"/>
    </source>
</evidence>
<evidence type="ECO:0000269" key="6">
    <source>
    </source>
</evidence>
<evidence type="ECO:0000269" key="7">
    <source>
    </source>
</evidence>
<evidence type="ECO:0000303" key="8">
    <source>
    </source>
</evidence>
<evidence type="ECO:0000305" key="9"/>
<evidence type="ECO:0000305" key="10">
    <source>
    </source>
</evidence>